<comment type="function">
    <text evidence="1">GTPase that plays an essential role in the late steps of ribosome biogenesis.</text>
</comment>
<comment type="subunit">
    <text evidence="1">Associates with the 50S ribosomal subunit.</text>
</comment>
<comment type="similarity">
    <text evidence="1">Belongs to the TRAFAC class TrmE-Era-EngA-EngB-Septin-like GTPase superfamily. EngA (Der) GTPase family.</text>
</comment>
<reference key="1">
    <citation type="journal article" date="2005" name="Proc. Natl. Acad. Sci. U.S.A.">
        <title>Whole genome sequence of Staphylococcus saprophyticus reveals the pathogenesis of uncomplicated urinary tract infection.</title>
        <authorList>
            <person name="Kuroda M."/>
            <person name="Yamashita A."/>
            <person name="Hirakawa H."/>
            <person name="Kumano M."/>
            <person name="Morikawa K."/>
            <person name="Higashide M."/>
            <person name="Maruyama A."/>
            <person name="Inose Y."/>
            <person name="Matoba K."/>
            <person name="Toh H."/>
            <person name="Kuhara S."/>
            <person name="Hattori M."/>
            <person name="Ohta T."/>
        </authorList>
    </citation>
    <scope>NUCLEOTIDE SEQUENCE [LARGE SCALE GENOMIC DNA]</scope>
    <source>
        <strain>ATCC 15305 / DSM 20229 / NCIMB 8711 / NCTC 7292 / S-41</strain>
    </source>
</reference>
<keyword id="KW-0342">GTP-binding</keyword>
<keyword id="KW-0547">Nucleotide-binding</keyword>
<keyword id="KW-1185">Reference proteome</keyword>
<keyword id="KW-0677">Repeat</keyword>
<keyword id="KW-0690">Ribosome biogenesis</keyword>
<evidence type="ECO:0000255" key="1">
    <source>
        <dbReference type="HAMAP-Rule" id="MF_00195"/>
    </source>
</evidence>
<feature type="chain" id="PRO_1000011750" description="GTPase Der">
    <location>
        <begin position="1"/>
        <end position="436"/>
    </location>
</feature>
<feature type="domain" description="EngA-type G 1">
    <location>
        <begin position="4"/>
        <end position="167"/>
    </location>
</feature>
<feature type="domain" description="EngA-type G 2">
    <location>
        <begin position="176"/>
        <end position="351"/>
    </location>
</feature>
<feature type="domain" description="KH-like" evidence="1">
    <location>
        <begin position="352"/>
        <end position="436"/>
    </location>
</feature>
<feature type="binding site" evidence="1">
    <location>
        <begin position="10"/>
        <end position="17"/>
    </location>
    <ligand>
        <name>GTP</name>
        <dbReference type="ChEBI" id="CHEBI:37565"/>
        <label>1</label>
    </ligand>
</feature>
<feature type="binding site" evidence="1">
    <location>
        <begin position="57"/>
        <end position="61"/>
    </location>
    <ligand>
        <name>GTP</name>
        <dbReference type="ChEBI" id="CHEBI:37565"/>
        <label>1</label>
    </ligand>
</feature>
<feature type="binding site" evidence="1">
    <location>
        <begin position="119"/>
        <end position="122"/>
    </location>
    <ligand>
        <name>GTP</name>
        <dbReference type="ChEBI" id="CHEBI:37565"/>
        <label>1</label>
    </ligand>
</feature>
<feature type="binding site" evidence="1">
    <location>
        <begin position="182"/>
        <end position="189"/>
    </location>
    <ligand>
        <name>GTP</name>
        <dbReference type="ChEBI" id="CHEBI:37565"/>
        <label>2</label>
    </ligand>
</feature>
<feature type="binding site" evidence="1">
    <location>
        <begin position="229"/>
        <end position="233"/>
    </location>
    <ligand>
        <name>GTP</name>
        <dbReference type="ChEBI" id="CHEBI:37565"/>
        <label>2</label>
    </ligand>
</feature>
<feature type="binding site" evidence="1">
    <location>
        <begin position="294"/>
        <end position="297"/>
    </location>
    <ligand>
        <name>GTP</name>
        <dbReference type="ChEBI" id="CHEBI:37565"/>
        <label>2</label>
    </ligand>
</feature>
<protein>
    <recommendedName>
        <fullName evidence="1">GTPase Der</fullName>
    </recommendedName>
    <alternativeName>
        <fullName evidence="1">GTP-binding protein EngA</fullName>
    </alternativeName>
</protein>
<accession>Q49XS9</accession>
<proteinExistence type="inferred from homology"/>
<organism>
    <name type="scientific">Staphylococcus saprophyticus subsp. saprophyticus (strain ATCC 15305 / DSM 20229 / NCIMB 8711 / NCTC 7292 / S-41)</name>
    <dbReference type="NCBI Taxonomy" id="342451"/>
    <lineage>
        <taxon>Bacteria</taxon>
        <taxon>Bacillati</taxon>
        <taxon>Bacillota</taxon>
        <taxon>Bacilli</taxon>
        <taxon>Bacillales</taxon>
        <taxon>Staphylococcaceae</taxon>
        <taxon>Staphylococcus</taxon>
    </lineage>
</organism>
<sequence>MTKPIVAIVGRPNVGKSTIFNRVVGERVSIVEDTPGVTRDRIYSSGEWLTHDFNIIDTGGIEIGDAPFQTQIRAQAEVAIDEADVIIFMVNVREGLTQSDEMVAQMLYKSKKPVVLAVNKVDNPEMRNEIYDFYSLGFGDPYPISGSHGLGLGDLLDAVVKHFKEEEPDPYDDDTIRLSIIGRPNVGKSSLVNAILGEDRVIVSNVAGTTRDAVDTEYSYDDQDYVLIDTAGMRKKGKVYENTEKYSVLRALKAIERSNVILIVIDAEQGIIEQDKRVAGYAHEEGKAIVIVVNKWDTVDKETNTMKKFKDEVRKEFQFLDYAEIAFVSAKEKQRLRTLFPYIKEASENHKKRVQSSTLNEVVTDAISMNPTPTDKGRRLNVFYATQVAIEPPTFIVFVNDVELMHFSYKRYLENQIRAAFGFEGTPVHIIARKRN</sequence>
<dbReference type="EMBL" id="AP008934">
    <property type="protein sequence ID" value="BAE18416.1"/>
    <property type="molecule type" value="Genomic_DNA"/>
</dbReference>
<dbReference type="RefSeq" id="WP_002483246.1">
    <property type="nucleotide sequence ID" value="NZ_MTGA01000038.1"/>
</dbReference>
<dbReference type="SMR" id="Q49XS9"/>
<dbReference type="GeneID" id="66867501"/>
<dbReference type="KEGG" id="ssp:SSP1271"/>
<dbReference type="PATRIC" id="fig|342451.11.peg.1273"/>
<dbReference type="eggNOG" id="COG1160">
    <property type="taxonomic scope" value="Bacteria"/>
</dbReference>
<dbReference type="HOGENOM" id="CLU_016077_6_2_9"/>
<dbReference type="OrthoDB" id="9805918at2"/>
<dbReference type="Proteomes" id="UP000006371">
    <property type="component" value="Chromosome"/>
</dbReference>
<dbReference type="GO" id="GO:0005525">
    <property type="term" value="F:GTP binding"/>
    <property type="evidence" value="ECO:0007669"/>
    <property type="project" value="UniProtKB-UniRule"/>
</dbReference>
<dbReference type="GO" id="GO:0043022">
    <property type="term" value="F:ribosome binding"/>
    <property type="evidence" value="ECO:0007669"/>
    <property type="project" value="TreeGrafter"/>
</dbReference>
<dbReference type="GO" id="GO:0042254">
    <property type="term" value="P:ribosome biogenesis"/>
    <property type="evidence" value="ECO:0007669"/>
    <property type="project" value="UniProtKB-KW"/>
</dbReference>
<dbReference type="CDD" id="cd01894">
    <property type="entry name" value="EngA1"/>
    <property type="match status" value="1"/>
</dbReference>
<dbReference type="CDD" id="cd01895">
    <property type="entry name" value="EngA2"/>
    <property type="match status" value="1"/>
</dbReference>
<dbReference type="FunFam" id="3.30.300.20:FF:000004">
    <property type="entry name" value="GTPase Der"/>
    <property type="match status" value="1"/>
</dbReference>
<dbReference type="FunFam" id="3.40.50.300:FF:000040">
    <property type="entry name" value="GTPase Der"/>
    <property type="match status" value="1"/>
</dbReference>
<dbReference type="FunFam" id="3.40.50.300:FF:000057">
    <property type="entry name" value="GTPase Der"/>
    <property type="match status" value="1"/>
</dbReference>
<dbReference type="Gene3D" id="3.30.300.20">
    <property type="match status" value="1"/>
</dbReference>
<dbReference type="Gene3D" id="3.40.50.300">
    <property type="entry name" value="P-loop containing nucleotide triphosphate hydrolases"/>
    <property type="match status" value="2"/>
</dbReference>
<dbReference type="HAMAP" id="MF_00195">
    <property type="entry name" value="GTPase_Der"/>
    <property type="match status" value="1"/>
</dbReference>
<dbReference type="InterPro" id="IPR031166">
    <property type="entry name" value="G_ENGA"/>
</dbReference>
<dbReference type="InterPro" id="IPR006073">
    <property type="entry name" value="GTP-bd"/>
</dbReference>
<dbReference type="InterPro" id="IPR016484">
    <property type="entry name" value="GTPase_Der"/>
</dbReference>
<dbReference type="InterPro" id="IPR032859">
    <property type="entry name" value="KH_dom-like"/>
</dbReference>
<dbReference type="InterPro" id="IPR015946">
    <property type="entry name" value="KH_dom-like_a/b"/>
</dbReference>
<dbReference type="InterPro" id="IPR027417">
    <property type="entry name" value="P-loop_NTPase"/>
</dbReference>
<dbReference type="InterPro" id="IPR005225">
    <property type="entry name" value="Small_GTP-bd"/>
</dbReference>
<dbReference type="NCBIfam" id="TIGR03594">
    <property type="entry name" value="GTPase_EngA"/>
    <property type="match status" value="1"/>
</dbReference>
<dbReference type="NCBIfam" id="TIGR00231">
    <property type="entry name" value="small_GTP"/>
    <property type="match status" value="2"/>
</dbReference>
<dbReference type="PANTHER" id="PTHR43834">
    <property type="entry name" value="GTPASE DER"/>
    <property type="match status" value="1"/>
</dbReference>
<dbReference type="PANTHER" id="PTHR43834:SF6">
    <property type="entry name" value="GTPASE DER"/>
    <property type="match status" value="1"/>
</dbReference>
<dbReference type="Pfam" id="PF14714">
    <property type="entry name" value="KH_dom-like"/>
    <property type="match status" value="1"/>
</dbReference>
<dbReference type="Pfam" id="PF01926">
    <property type="entry name" value="MMR_HSR1"/>
    <property type="match status" value="2"/>
</dbReference>
<dbReference type="PIRSF" id="PIRSF006485">
    <property type="entry name" value="GTP-binding_EngA"/>
    <property type="match status" value="1"/>
</dbReference>
<dbReference type="PRINTS" id="PR00326">
    <property type="entry name" value="GTP1OBG"/>
</dbReference>
<dbReference type="SUPFAM" id="SSF52540">
    <property type="entry name" value="P-loop containing nucleoside triphosphate hydrolases"/>
    <property type="match status" value="2"/>
</dbReference>
<dbReference type="PROSITE" id="PS51712">
    <property type="entry name" value="G_ENGA"/>
    <property type="match status" value="2"/>
</dbReference>
<name>DER_STAS1</name>
<gene>
    <name evidence="1" type="primary">der</name>
    <name type="synonym">engA</name>
    <name type="ordered locus">SSP1271</name>
</gene>